<keyword id="KW-0106">Calcium</keyword>
<keyword id="KW-0148">Chlorophyll</keyword>
<keyword id="KW-0157">Chromophore</keyword>
<keyword id="KW-0249">Electron transport</keyword>
<keyword id="KW-0359">Herbicide resistance</keyword>
<keyword id="KW-0408">Iron</keyword>
<keyword id="KW-0460">Magnesium</keyword>
<keyword id="KW-0464">Manganese</keyword>
<keyword id="KW-0472">Membrane</keyword>
<keyword id="KW-0479">Metal-binding</keyword>
<keyword id="KW-0560">Oxidoreductase</keyword>
<keyword id="KW-0602">Photosynthesis</keyword>
<keyword id="KW-0604">Photosystem II</keyword>
<keyword id="KW-0793">Thylakoid</keyword>
<keyword id="KW-0812">Transmembrane</keyword>
<keyword id="KW-1133">Transmembrane helix</keyword>
<keyword id="KW-0813">Transport</keyword>
<proteinExistence type="inferred from homology"/>
<sequence length="360" mass="39715">MTTTLQQRESASLWEQFCQWITSTNNRLYIGWFGVIMIPTLLTATTCFIIAFIAAPPVDIDGIREPVAGSLLYGNNIISGAVVPSSNAIGLHFYPIWEAASLDEWLYNGGPYQLVIFHFLLGVFCYLGRQWELSFRLGMRPWICVAYSAPVSAATAVFLIYPIGQGSFSDGMPLGISGTFNFMFVFQAEHNILMHPFHMLGVAGVFGGSLFSAMHGSLVTSSLVRETTEIESQNYGYKFGQEEETYNIVAAHGYFGRLIFQYASFNNSRSLHFFLGAWPVIGIWFTAMGVSTMAFNLNGFNFNQSILDSQGRVIGTWADVLNRAGIGMEVMHERNAHNFPLDLASGEQAPVALIAPAING</sequence>
<comment type="function">
    <text evidence="1">Photosystem II (PSII) is a light-driven water:plastoquinone oxidoreductase that uses light energy to abstract electrons from H(2)O, generating O(2) and a proton gradient subsequently used for ATP formation. It consists of a core antenna complex that captures photons, and an electron transfer chain that converts photonic excitation into a charge separation. The D1/D2 (PsbA/PsbD) reaction center heterodimer binds P680, the primary electron donor of PSII as well as several subsequent electron acceptors.</text>
</comment>
<comment type="catalytic activity">
    <reaction evidence="1">
        <text>2 a plastoquinone + 4 hnu + 2 H2O = 2 a plastoquinol + O2</text>
        <dbReference type="Rhea" id="RHEA:36359"/>
        <dbReference type="Rhea" id="RHEA-COMP:9561"/>
        <dbReference type="Rhea" id="RHEA-COMP:9562"/>
        <dbReference type="ChEBI" id="CHEBI:15377"/>
        <dbReference type="ChEBI" id="CHEBI:15379"/>
        <dbReference type="ChEBI" id="CHEBI:17757"/>
        <dbReference type="ChEBI" id="CHEBI:30212"/>
        <dbReference type="ChEBI" id="CHEBI:62192"/>
        <dbReference type="EC" id="1.10.3.9"/>
    </reaction>
</comment>
<comment type="cofactor">
    <text evidence="1">The D1/D2 heterodimer binds P680, chlorophylls that are the primary electron donor of PSII, and subsequent electron acceptors. It shares a non-heme iron and each subunit binds pheophytin, quinone, additional chlorophylls, carotenoids and lipids. D1 provides most of the ligands for the Mn4-Ca-O5 cluster of the oxygen-evolving complex (OEC). There is also a Cl(-1) ion associated with D1 and D2, which is required for oxygen evolution. The PSII complex binds additional chlorophylls, carotenoids and specific lipids.</text>
</comment>
<comment type="subunit">
    <text evidence="1">PSII is composed of 1 copy each of membrane proteins PsbA, PsbB, PsbC, PsbD, PsbE, PsbF, PsbH, PsbI, PsbJ, PsbK, PsbL, PsbM, PsbT, PsbX, PsbY, PsbZ, Psb30/Ycf12, peripheral proteins PsbO, CyanoQ (PsbQ), PsbU, PsbV and a large number of cofactors. It forms dimeric complexes.</text>
</comment>
<comment type="subcellular location">
    <subcellularLocation>
        <location evidence="1">Cellular thylakoid membrane</location>
        <topology evidence="1">Multi-pass membrane protein</topology>
    </subcellularLocation>
</comment>
<comment type="PTM">
    <text evidence="1">Tyr-161 forms a radical intermediate that is referred to as redox-active TyrZ, YZ or Y-Z.</text>
</comment>
<comment type="PTM">
    <text evidence="1">C-terminally processed by CtpA; processing is essential to allow assembly of the oxygen-evolving complex and thus photosynthetic growth.</text>
</comment>
<comment type="miscellaneous">
    <text evidence="1">Cyanobacteria usually contain more than 2 copies of the psbA gene.</text>
</comment>
<comment type="miscellaneous">
    <text evidence="1">2 of the reaction center chlorophylls (ChlD1 and ChlD2) are entirely coordinated by water.</text>
</comment>
<comment type="miscellaneous">
    <text evidence="1">Herbicides such as atrazine, BNT, diuron or ioxynil bind in the Q(B) binding site and block subsequent electron transfer.</text>
</comment>
<comment type="similarity">
    <text evidence="1">Belongs to the reaction center PufL/M/PsbA/D family.</text>
</comment>
<reference key="1">
    <citation type="journal article" date="2007" name="DNA Res.">
        <title>Complete genomic structure of the bloom-forming toxic cyanobacterium Microcystis aeruginosa NIES-843.</title>
        <authorList>
            <person name="Kaneko T."/>
            <person name="Nakajima N."/>
            <person name="Okamoto S."/>
            <person name="Suzuki I."/>
            <person name="Tanabe Y."/>
            <person name="Tamaoki M."/>
            <person name="Nakamura Y."/>
            <person name="Kasai F."/>
            <person name="Watanabe A."/>
            <person name="Kawashima K."/>
            <person name="Kishida Y."/>
            <person name="Ono A."/>
            <person name="Shimizu Y."/>
            <person name="Takahashi C."/>
            <person name="Minami C."/>
            <person name="Fujishiro T."/>
            <person name="Kohara M."/>
            <person name="Katoh M."/>
            <person name="Nakazaki N."/>
            <person name="Nakayama S."/>
            <person name="Yamada M."/>
            <person name="Tabata S."/>
            <person name="Watanabe M.M."/>
        </authorList>
    </citation>
    <scope>NUCLEOTIDE SEQUENCE [LARGE SCALE GENOMIC DNA]</scope>
    <source>
        <strain>NIES-843 / IAM M-247</strain>
    </source>
</reference>
<dbReference type="EC" id="1.10.3.9" evidence="1"/>
<dbReference type="EMBL" id="AP009552">
    <property type="protein sequence ID" value="BAG00844.1"/>
    <property type="molecule type" value="Genomic_DNA"/>
</dbReference>
<dbReference type="EMBL" id="AP009552">
    <property type="protein sequence ID" value="BAG00860.1"/>
    <property type="molecule type" value="Genomic_DNA"/>
</dbReference>
<dbReference type="EMBL" id="AP009552">
    <property type="protein sequence ID" value="BAG00873.1"/>
    <property type="molecule type" value="Genomic_DNA"/>
</dbReference>
<dbReference type="EMBL" id="AP009552">
    <property type="protein sequence ID" value="BAG00902.1"/>
    <property type="molecule type" value="Genomic_DNA"/>
</dbReference>
<dbReference type="EMBL" id="AP009552">
    <property type="protein sequence ID" value="BAG05636.1"/>
    <property type="molecule type" value="Genomic_DNA"/>
</dbReference>
<dbReference type="SMR" id="B0JIS8"/>
<dbReference type="STRING" id="449447.MAE_10220"/>
<dbReference type="PaxDb" id="449447-MAE_10220"/>
<dbReference type="EnsemblBacteria" id="BAG00844">
    <property type="protein sequence ID" value="BAG00844"/>
    <property type="gene ID" value="MAE_10220"/>
</dbReference>
<dbReference type="EnsemblBacteria" id="BAG00860">
    <property type="protein sequence ID" value="BAG00860"/>
    <property type="gene ID" value="MAE_10380"/>
</dbReference>
<dbReference type="EnsemblBacteria" id="BAG00873">
    <property type="protein sequence ID" value="BAG00873"/>
    <property type="gene ID" value="MAE_10510"/>
</dbReference>
<dbReference type="EnsemblBacteria" id="BAG00902">
    <property type="protein sequence ID" value="BAG00902"/>
    <property type="gene ID" value="MAE_10800"/>
</dbReference>
<dbReference type="EnsemblBacteria" id="BAG05636">
    <property type="protein sequence ID" value="BAG05636"/>
    <property type="gene ID" value="MAE_58140"/>
</dbReference>
<dbReference type="KEGG" id="mar:MAE_10220"/>
<dbReference type="KEGG" id="mar:MAE_10380"/>
<dbReference type="KEGG" id="mar:MAE_10510"/>
<dbReference type="KEGG" id="mar:MAE_10800"/>
<dbReference type="KEGG" id="mar:MAE_58140"/>
<dbReference type="eggNOG" id="ENOG502Z87P">
    <property type="taxonomic scope" value="Bacteria"/>
</dbReference>
<dbReference type="HOGENOM" id="CLU_054206_1_0_3"/>
<dbReference type="BioCyc" id="MAER449447:MAE_RS04475-MONOMER"/>
<dbReference type="BioCyc" id="MAER449447:MAE_RS04545-MONOMER"/>
<dbReference type="BioCyc" id="MAER449447:MAE_RS04610-MONOMER"/>
<dbReference type="BioCyc" id="MAER449447:MAE_RS04750-MONOMER"/>
<dbReference type="BioCyc" id="MAER449447:MAE_RS25355-MONOMER"/>
<dbReference type="Proteomes" id="UP000001510">
    <property type="component" value="Chromosome"/>
</dbReference>
<dbReference type="GO" id="GO:0009523">
    <property type="term" value="C:photosystem II"/>
    <property type="evidence" value="ECO:0007669"/>
    <property type="project" value="UniProtKB-KW"/>
</dbReference>
<dbReference type="GO" id="GO:0031676">
    <property type="term" value="C:plasma membrane-derived thylakoid membrane"/>
    <property type="evidence" value="ECO:0007669"/>
    <property type="project" value="UniProtKB-SubCell"/>
</dbReference>
<dbReference type="GO" id="GO:0016168">
    <property type="term" value="F:chlorophyll binding"/>
    <property type="evidence" value="ECO:0007669"/>
    <property type="project" value="UniProtKB-UniRule"/>
</dbReference>
<dbReference type="GO" id="GO:0045156">
    <property type="term" value="F:electron transporter, transferring electrons within the cyclic electron transport pathway of photosynthesis activity"/>
    <property type="evidence" value="ECO:0007669"/>
    <property type="project" value="InterPro"/>
</dbReference>
<dbReference type="GO" id="GO:0005506">
    <property type="term" value="F:iron ion binding"/>
    <property type="evidence" value="ECO:0007669"/>
    <property type="project" value="UniProtKB-UniRule"/>
</dbReference>
<dbReference type="GO" id="GO:0016682">
    <property type="term" value="F:oxidoreductase activity, acting on diphenols and related substances as donors, oxygen as acceptor"/>
    <property type="evidence" value="ECO:0007669"/>
    <property type="project" value="UniProtKB-UniRule"/>
</dbReference>
<dbReference type="GO" id="GO:0010242">
    <property type="term" value="F:oxygen evolving activity"/>
    <property type="evidence" value="ECO:0007669"/>
    <property type="project" value="UniProtKB-EC"/>
</dbReference>
<dbReference type="GO" id="GO:0009772">
    <property type="term" value="P:photosynthetic electron transport in photosystem II"/>
    <property type="evidence" value="ECO:0007669"/>
    <property type="project" value="InterPro"/>
</dbReference>
<dbReference type="GO" id="GO:0009635">
    <property type="term" value="P:response to herbicide"/>
    <property type="evidence" value="ECO:0007669"/>
    <property type="project" value="UniProtKB-KW"/>
</dbReference>
<dbReference type="CDD" id="cd09289">
    <property type="entry name" value="Photosystem-II_D1"/>
    <property type="match status" value="1"/>
</dbReference>
<dbReference type="FunFam" id="1.20.85.10:FF:000002">
    <property type="entry name" value="Photosystem II protein D1"/>
    <property type="match status" value="1"/>
</dbReference>
<dbReference type="Gene3D" id="1.20.85.10">
    <property type="entry name" value="Photosystem II protein D1-like"/>
    <property type="match status" value="2"/>
</dbReference>
<dbReference type="HAMAP" id="MF_01379">
    <property type="entry name" value="PSII_PsbA_D1"/>
    <property type="match status" value="1"/>
</dbReference>
<dbReference type="InterPro" id="IPR055266">
    <property type="entry name" value="D1/D2"/>
</dbReference>
<dbReference type="InterPro" id="IPR036854">
    <property type="entry name" value="Photo_II_D1/D2_sf"/>
</dbReference>
<dbReference type="InterPro" id="IPR000484">
    <property type="entry name" value="Photo_RC_L/M"/>
</dbReference>
<dbReference type="InterPro" id="IPR055265">
    <property type="entry name" value="Photo_RC_L/M_CS"/>
</dbReference>
<dbReference type="InterPro" id="IPR005867">
    <property type="entry name" value="PSII_D1"/>
</dbReference>
<dbReference type="NCBIfam" id="TIGR01151">
    <property type="entry name" value="psbA"/>
    <property type="match status" value="1"/>
</dbReference>
<dbReference type="PANTHER" id="PTHR33149:SF12">
    <property type="entry name" value="PHOTOSYSTEM II D2 PROTEIN"/>
    <property type="match status" value="1"/>
</dbReference>
<dbReference type="PANTHER" id="PTHR33149">
    <property type="entry name" value="PHOTOSYSTEM II PROTEIN D1"/>
    <property type="match status" value="1"/>
</dbReference>
<dbReference type="Pfam" id="PF00124">
    <property type="entry name" value="Photo_RC"/>
    <property type="match status" value="1"/>
</dbReference>
<dbReference type="PRINTS" id="PR00256">
    <property type="entry name" value="REACTNCENTRE"/>
</dbReference>
<dbReference type="SUPFAM" id="SSF81483">
    <property type="entry name" value="Bacterial photosystem II reaction centre, L and M subunits"/>
    <property type="match status" value="1"/>
</dbReference>
<dbReference type="PROSITE" id="PS00244">
    <property type="entry name" value="REACTION_CENTER"/>
    <property type="match status" value="1"/>
</dbReference>
<name>PSBA_MICAN</name>
<organism>
    <name type="scientific">Microcystis aeruginosa (strain NIES-843 / IAM M-2473)</name>
    <dbReference type="NCBI Taxonomy" id="449447"/>
    <lineage>
        <taxon>Bacteria</taxon>
        <taxon>Bacillati</taxon>
        <taxon>Cyanobacteriota</taxon>
        <taxon>Cyanophyceae</taxon>
        <taxon>Oscillatoriophycideae</taxon>
        <taxon>Chroococcales</taxon>
        <taxon>Microcystaceae</taxon>
        <taxon>Microcystis</taxon>
    </lineage>
</organism>
<protein>
    <recommendedName>
        <fullName evidence="1">Photosystem II protein D1</fullName>
        <shortName evidence="1">PSII D1 protein</shortName>
        <ecNumber evidence="1">1.10.3.9</ecNumber>
    </recommendedName>
    <alternativeName>
        <fullName evidence="1">Photosystem II Q(B) protein</fullName>
    </alternativeName>
</protein>
<evidence type="ECO:0000255" key="1">
    <source>
        <dbReference type="HAMAP-Rule" id="MF_01379"/>
    </source>
</evidence>
<evidence type="ECO:0000305" key="2"/>
<gene>
    <name evidence="1 2" type="primary">psbA1</name>
    <name type="ordered locus">MAE_10220</name>
</gene>
<gene>
    <name evidence="1 2" type="primary">psbA2</name>
    <name type="ordered locus">MAE_10380</name>
</gene>
<gene>
    <name evidence="1 2" type="primary">psbA3</name>
    <name type="ordered locus">MAE_10510</name>
</gene>
<gene>
    <name evidence="1 2" type="primary">psbA4</name>
    <name type="ordered locus">MAE_10800</name>
</gene>
<gene>
    <name evidence="1 2" type="primary">psbA5</name>
    <name type="ordered locus">MAE_58140</name>
</gene>
<feature type="chain" id="PRO_0000339926" description="Photosystem II protein D1" evidence="1">
    <location>
        <begin position="1"/>
        <end position="344"/>
    </location>
</feature>
<feature type="propeptide" id="PRO_0000339927" evidence="1">
    <location>
        <begin position="345"/>
        <end position="360"/>
    </location>
</feature>
<feature type="transmembrane region" description="Helical" evidence="1">
    <location>
        <begin position="29"/>
        <end position="46"/>
    </location>
</feature>
<feature type="transmembrane region" description="Helical" evidence="1">
    <location>
        <begin position="118"/>
        <end position="133"/>
    </location>
</feature>
<feature type="transmembrane region" description="Helical" evidence="1">
    <location>
        <begin position="142"/>
        <end position="156"/>
    </location>
</feature>
<feature type="transmembrane region" description="Helical" evidence="1">
    <location>
        <begin position="197"/>
        <end position="218"/>
    </location>
</feature>
<feature type="transmembrane region" description="Helical" evidence="1">
    <location>
        <begin position="274"/>
        <end position="288"/>
    </location>
</feature>
<feature type="binding site" description="axial binding residue" evidence="1">
    <location>
        <position position="118"/>
    </location>
    <ligand>
        <name>chlorophyll a</name>
        <dbReference type="ChEBI" id="CHEBI:58416"/>
        <label>ChlzD1</label>
    </ligand>
    <ligandPart>
        <name>Mg</name>
        <dbReference type="ChEBI" id="CHEBI:25107"/>
    </ligandPart>
</feature>
<feature type="binding site" evidence="1">
    <location>
        <position position="126"/>
    </location>
    <ligand>
        <name>pheophytin a</name>
        <dbReference type="ChEBI" id="CHEBI:136840"/>
        <label>D1</label>
    </ligand>
</feature>
<feature type="binding site" evidence="1">
    <location>
        <position position="170"/>
    </location>
    <ligand>
        <name>[CaMn4O5] cluster</name>
        <dbReference type="ChEBI" id="CHEBI:189552"/>
    </ligand>
</feature>
<feature type="binding site" evidence="1">
    <location>
        <position position="189"/>
    </location>
    <ligand>
        <name>[CaMn4O5] cluster</name>
        <dbReference type="ChEBI" id="CHEBI:189552"/>
    </ligand>
</feature>
<feature type="binding site" description="axial binding residue" evidence="1">
    <location>
        <position position="198"/>
    </location>
    <ligand>
        <name>chlorophyll a</name>
        <dbReference type="ChEBI" id="CHEBI:58416"/>
        <label>PD1</label>
    </ligand>
    <ligandPart>
        <name>Mg</name>
        <dbReference type="ChEBI" id="CHEBI:25107"/>
    </ligandPart>
</feature>
<feature type="binding site" evidence="1">
    <location>
        <position position="215"/>
    </location>
    <ligand>
        <name>a quinone</name>
        <dbReference type="ChEBI" id="CHEBI:132124"/>
        <label>B</label>
    </ligand>
</feature>
<feature type="binding site" evidence="1">
    <location>
        <position position="215"/>
    </location>
    <ligand>
        <name>Fe cation</name>
        <dbReference type="ChEBI" id="CHEBI:24875"/>
        <note>ligand shared with heterodimeric partner</note>
    </ligand>
</feature>
<feature type="binding site" evidence="1">
    <location>
        <begin position="264"/>
        <end position="265"/>
    </location>
    <ligand>
        <name>a quinone</name>
        <dbReference type="ChEBI" id="CHEBI:132124"/>
        <label>B</label>
    </ligand>
</feature>
<feature type="binding site" evidence="1">
    <location>
        <position position="272"/>
    </location>
    <ligand>
        <name>Fe cation</name>
        <dbReference type="ChEBI" id="CHEBI:24875"/>
        <note>ligand shared with heterodimeric partner</note>
    </ligand>
</feature>
<feature type="binding site" evidence="1">
    <location>
        <position position="332"/>
    </location>
    <ligand>
        <name>[CaMn4O5] cluster</name>
        <dbReference type="ChEBI" id="CHEBI:189552"/>
    </ligand>
</feature>
<feature type="binding site" evidence="1">
    <location>
        <position position="333"/>
    </location>
    <ligand>
        <name>[CaMn4O5] cluster</name>
        <dbReference type="ChEBI" id="CHEBI:189552"/>
    </ligand>
</feature>
<feature type="binding site" evidence="1">
    <location>
        <position position="342"/>
    </location>
    <ligand>
        <name>[CaMn4O5] cluster</name>
        <dbReference type="ChEBI" id="CHEBI:189552"/>
    </ligand>
</feature>
<feature type="binding site" evidence="1">
    <location>
        <position position="344"/>
    </location>
    <ligand>
        <name>[CaMn4O5] cluster</name>
        <dbReference type="ChEBI" id="CHEBI:189552"/>
    </ligand>
</feature>
<feature type="site" description="Tyrosine radical intermediate" evidence="1">
    <location>
        <position position="161"/>
    </location>
</feature>
<feature type="site" description="Stabilizes free radical intermediate" evidence="1">
    <location>
        <position position="190"/>
    </location>
</feature>
<feature type="site" description="Cleavage; by CtpA" evidence="1">
    <location>
        <begin position="344"/>
        <end position="345"/>
    </location>
</feature>
<accession>B0JIS8</accession>